<evidence type="ECO:0000250" key="1"/>
<evidence type="ECO:0000305" key="2"/>
<gene>
    <name type="primary">Segment-6</name>
</gene>
<dbReference type="EMBL" id="M21845">
    <property type="protein sequence ID" value="AAA42849.1"/>
    <property type="molecule type" value="Genomic_RNA"/>
</dbReference>
<dbReference type="PIR" id="JS0323">
    <property type="entry name" value="P5XR15"/>
</dbReference>
<dbReference type="SMR" id="P12436"/>
<dbReference type="GO" id="GO:0039624">
    <property type="term" value="C:viral outer capsid"/>
    <property type="evidence" value="ECO:0007669"/>
    <property type="project" value="UniProtKB-KW"/>
</dbReference>
<dbReference type="GO" id="GO:0005198">
    <property type="term" value="F:structural molecule activity"/>
    <property type="evidence" value="ECO:0007669"/>
    <property type="project" value="InterPro"/>
</dbReference>
<dbReference type="GO" id="GO:0140267">
    <property type="term" value="P:symbiont entry into host cell via permeabilization of host membrane"/>
    <property type="evidence" value="ECO:0007669"/>
    <property type="project" value="UniProtKB-KW"/>
</dbReference>
<dbReference type="InterPro" id="IPR000145">
    <property type="entry name" value="Capsid_VP5_Orbivir"/>
</dbReference>
<dbReference type="Pfam" id="PF00901">
    <property type="entry name" value="Orbi_VP5"/>
    <property type="match status" value="1"/>
</dbReference>
<accession>P12436</accession>
<name>VP5_BTV1A</name>
<protein>
    <recommendedName>
        <fullName>Outer capsid protein VP5</fullName>
    </recommendedName>
</protein>
<proteinExistence type="inferred from homology"/>
<organism>
    <name type="scientific">Bluetongue virus 1 (isolate Australia)</name>
    <name type="common">BTV 1</name>
    <dbReference type="NCBI Taxonomy" id="10904"/>
    <lineage>
        <taxon>Viruses</taxon>
        <taxon>Riboviria</taxon>
        <taxon>Orthornavirae</taxon>
        <taxon>Duplornaviricota</taxon>
        <taxon>Resentoviricetes</taxon>
        <taxon>Reovirales</taxon>
        <taxon>Sedoreoviridae</taxon>
        <taxon>Orbivirus</taxon>
        <taxon>Bluetongue virus</taxon>
    </lineage>
</organism>
<sequence>MGKVIRSLSRFGKKVGNALTSNTAKKIYSTIGKAAERFAESEIGSAAIDGLVQGSVHSILTGESYGEYVKQAVLLNVLGSGEEIPDPLSQGETEIQAKLRELEDEQRNELVRLKYNDKIKEKFGEELEEVYEFMNGAAKAEVEDEKQFDILNKAVTSYNKILTEEDLQMRRLANALQKEIGERTHAETVMVKEYRNKIDALKNAIEIERDGMQEEAIQEIAGMTRGVLEAASEEVPLIGAGMATAVATGRAIEGAYKLKKVINALSGIDLTHLRTPKIEPSVVSTILEYRTRAIPDSALAVSVLSKNRAIQENHKELIHIKDEILPRFKKAMDEEKEICGIEDKTIHPKVMMRFKIPRAQQPQIHVYSAPWDSDDVFFFHCISHHHANESFFLGFDLSIDLVHYEDLTAHWHALGAAQMAMGRTLSEAYKEFLNMAISNAYGTQMHTRRLVRSKMVHPIYLGSLHYDISFLDLRGNAQRIVYDDELQMHILRGPIHFQRRAILGALKFGCKVLGDRLDVPLFLRNA</sequence>
<keyword id="KW-0167">Capsid protein</keyword>
<keyword id="KW-1152">Outer capsid protein</keyword>
<keyword id="KW-1162">Viral penetration into host cytoplasm</keyword>
<keyword id="KW-1173">Viral penetration via permeabilization of host membrane</keyword>
<keyword id="KW-0946">Virion</keyword>
<keyword id="KW-1160">Virus entry into host cell</keyword>
<feature type="chain" id="PRO_0000222709" description="Outer capsid protein VP5">
    <location>
        <begin position="1"/>
        <end position="526"/>
    </location>
</feature>
<feature type="region of interest" description="Involved in membrane permeabilization" evidence="1">
    <location>
        <begin position="1"/>
        <end position="42"/>
    </location>
</feature>
<reference key="1">
    <citation type="journal article" date="1988" name="Virus Res.">
        <title>The complete nucleotide sequence of the outer coat protein, VP5, of the Australian bluetongue virus (BTV) serotype 1 reveals conserved and non-conserved sequences.</title>
        <authorList>
            <person name="Gould A.R."/>
            <person name="Pritchard L.I."/>
        </authorList>
    </citation>
    <scope>NUCLEOTIDE SEQUENCE [GENOMIC RNA]</scope>
</reference>
<comment type="function">
    <text evidence="1">VP5 protein is one of the two proteins (with VP2) which constitute the virus particle outer capsid. Acts as a membrane permeabilization protein that mediates release of viral particles from endosomal compartments into the cytoplasm. Permeabilization activity is probably negatively regulated by VP2 and is triggered by endosomal degradation of VP2 and exposure to low pH (By similarity).</text>
</comment>
<comment type="subcellular location">
    <subcellularLocation>
        <location evidence="2">Virion</location>
    </subcellularLocation>
</comment>
<comment type="similarity">
    <text evidence="2">Belongs to the orbivirus VP5 family.</text>
</comment>
<organismHost>
    <name type="scientific">Antilocapra americana</name>
    <name type="common">Pronghorn</name>
    <dbReference type="NCBI Taxonomy" id="9891"/>
</organismHost>
<organismHost>
    <name type="scientific">Bos taurus</name>
    <name type="common">Bovine</name>
    <dbReference type="NCBI Taxonomy" id="9913"/>
</organismHost>
<organismHost>
    <name type="scientific">Capra hircus</name>
    <name type="common">Goat</name>
    <dbReference type="NCBI Taxonomy" id="9925"/>
</organismHost>
<organismHost>
    <name type="scientific">Culicoides variipennis</name>
    <name type="common">Biting midge</name>
    <dbReference type="NCBI Taxonomy" id="46212"/>
</organismHost>
<organismHost>
    <name type="scientific">Ovis aries</name>
    <name type="common">Sheep</name>
    <dbReference type="NCBI Taxonomy" id="9940"/>
</organismHost>